<comment type="function">
    <text evidence="1">Phosphorylation of dTMP to form dTDP in both de novo and salvage pathways of dTTP synthesis.</text>
</comment>
<comment type="catalytic activity">
    <reaction evidence="1">
        <text>dTMP + ATP = dTDP + ADP</text>
        <dbReference type="Rhea" id="RHEA:13517"/>
        <dbReference type="ChEBI" id="CHEBI:30616"/>
        <dbReference type="ChEBI" id="CHEBI:58369"/>
        <dbReference type="ChEBI" id="CHEBI:63528"/>
        <dbReference type="ChEBI" id="CHEBI:456216"/>
        <dbReference type="EC" id="2.7.4.9"/>
    </reaction>
</comment>
<comment type="similarity">
    <text evidence="1">Belongs to the thymidylate kinase family.</text>
</comment>
<gene>
    <name evidence="1" type="primary">tmk</name>
    <name type="ordered locus">Gbem_3204</name>
</gene>
<evidence type="ECO:0000255" key="1">
    <source>
        <dbReference type="HAMAP-Rule" id="MF_00165"/>
    </source>
</evidence>
<sequence length="225" mass="24218">MGFFITFEGIEGCGKTTQLRLLKERLEAAGEKVTVTREPGGCPVADQMRAILLDAKNSAITPLAELLLYAAARAQHVQEVIVPALERGETVLCDRFTDATVAYQGHGRGLDLTVIEELNTLATGRVQPALTVLIDCPVEVGLSRALARIEATSGAKEERFERESLLFHQKVRNGYLTLAAAFPERFVVVDGSGDVRQTGLLVAEALRQRMQSLGKAGLAAVKAGC</sequence>
<proteinExistence type="inferred from homology"/>
<organism>
    <name type="scientific">Citrifermentans bemidjiense (strain ATCC BAA-1014 / DSM 16622 / JCM 12645 / Bem)</name>
    <name type="common">Geobacter bemidjiensis</name>
    <dbReference type="NCBI Taxonomy" id="404380"/>
    <lineage>
        <taxon>Bacteria</taxon>
        <taxon>Pseudomonadati</taxon>
        <taxon>Thermodesulfobacteriota</taxon>
        <taxon>Desulfuromonadia</taxon>
        <taxon>Geobacterales</taxon>
        <taxon>Geobacteraceae</taxon>
        <taxon>Citrifermentans</taxon>
    </lineage>
</organism>
<name>KTHY_CITBB</name>
<accession>B5E9M9</accession>
<keyword id="KW-0067">ATP-binding</keyword>
<keyword id="KW-0418">Kinase</keyword>
<keyword id="KW-0545">Nucleotide biosynthesis</keyword>
<keyword id="KW-0547">Nucleotide-binding</keyword>
<keyword id="KW-1185">Reference proteome</keyword>
<keyword id="KW-0808">Transferase</keyword>
<reference key="1">
    <citation type="submission" date="2008-07" db="EMBL/GenBank/DDBJ databases">
        <title>Complete sequence of Geobacter bemidjiensis BEM.</title>
        <authorList>
            <consortium name="US DOE Joint Genome Institute"/>
            <person name="Lucas S."/>
            <person name="Copeland A."/>
            <person name="Lapidus A."/>
            <person name="Glavina del Rio T."/>
            <person name="Dalin E."/>
            <person name="Tice H."/>
            <person name="Bruce D."/>
            <person name="Goodwin L."/>
            <person name="Pitluck S."/>
            <person name="Kiss H."/>
            <person name="Brettin T."/>
            <person name="Detter J.C."/>
            <person name="Han C."/>
            <person name="Kuske C.R."/>
            <person name="Schmutz J."/>
            <person name="Larimer F."/>
            <person name="Land M."/>
            <person name="Hauser L."/>
            <person name="Kyrpides N."/>
            <person name="Lykidis A."/>
            <person name="Lovley D."/>
            <person name="Richardson P."/>
        </authorList>
    </citation>
    <scope>NUCLEOTIDE SEQUENCE [LARGE SCALE GENOMIC DNA]</scope>
    <source>
        <strain>ATCC BAA-1014 / DSM 16622 / JCM 12645 / Bem</strain>
    </source>
</reference>
<dbReference type="EC" id="2.7.4.9" evidence="1"/>
<dbReference type="EMBL" id="CP001124">
    <property type="protein sequence ID" value="ACH40203.1"/>
    <property type="molecule type" value="Genomic_DNA"/>
</dbReference>
<dbReference type="RefSeq" id="WP_012531635.1">
    <property type="nucleotide sequence ID" value="NC_011146.1"/>
</dbReference>
<dbReference type="SMR" id="B5E9M9"/>
<dbReference type="STRING" id="404380.Gbem_3204"/>
<dbReference type="KEGG" id="gbm:Gbem_3204"/>
<dbReference type="eggNOG" id="COG0125">
    <property type="taxonomic scope" value="Bacteria"/>
</dbReference>
<dbReference type="HOGENOM" id="CLU_049131_0_2_7"/>
<dbReference type="OrthoDB" id="9774907at2"/>
<dbReference type="Proteomes" id="UP000008825">
    <property type="component" value="Chromosome"/>
</dbReference>
<dbReference type="GO" id="GO:0005829">
    <property type="term" value="C:cytosol"/>
    <property type="evidence" value="ECO:0007669"/>
    <property type="project" value="TreeGrafter"/>
</dbReference>
<dbReference type="GO" id="GO:0005524">
    <property type="term" value="F:ATP binding"/>
    <property type="evidence" value="ECO:0007669"/>
    <property type="project" value="UniProtKB-UniRule"/>
</dbReference>
<dbReference type="GO" id="GO:0004798">
    <property type="term" value="F:dTMP kinase activity"/>
    <property type="evidence" value="ECO:0007669"/>
    <property type="project" value="UniProtKB-UniRule"/>
</dbReference>
<dbReference type="GO" id="GO:0006233">
    <property type="term" value="P:dTDP biosynthetic process"/>
    <property type="evidence" value="ECO:0007669"/>
    <property type="project" value="InterPro"/>
</dbReference>
<dbReference type="GO" id="GO:0006235">
    <property type="term" value="P:dTTP biosynthetic process"/>
    <property type="evidence" value="ECO:0007669"/>
    <property type="project" value="UniProtKB-UniRule"/>
</dbReference>
<dbReference type="GO" id="GO:0006227">
    <property type="term" value="P:dUDP biosynthetic process"/>
    <property type="evidence" value="ECO:0007669"/>
    <property type="project" value="TreeGrafter"/>
</dbReference>
<dbReference type="CDD" id="cd01672">
    <property type="entry name" value="TMPK"/>
    <property type="match status" value="1"/>
</dbReference>
<dbReference type="FunFam" id="3.40.50.300:FF:000225">
    <property type="entry name" value="Thymidylate kinase"/>
    <property type="match status" value="1"/>
</dbReference>
<dbReference type="Gene3D" id="3.40.50.300">
    <property type="entry name" value="P-loop containing nucleotide triphosphate hydrolases"/>
    <property type="match status" value="1"/>
</dbReference>
<dbReference type="HAMAP" id="MF_00165">
    <property type="entry name" value="Thymidylate_kinase"/>
    <property type="match status" value="1"/>
</dbReference>
<dbReference type="InterPro" id="IPR027417">
    <property type="entry name" value="P-loop_NTPase"/>
</dbReference>
<dbReference type="InterPro" id="IPR039430">
    <property type="entry name" value="Thymidylate_kin-like_dom"/>
</dbReference>
<dbReference type="InterPro" id="IPR018094">
    <property type="entry name" value="Thymidylate_kinase"/>
</dbReference>
<dbReference type="NCBIfam" id="TIGR00041">
    <property type="entry name" value="DTMP_kinase"/>
    <property type="match status" value="1"/>
</dbReference>
<dbReference type="PANTHER" id="PTHR10344">
    <property type="entry name" value="THYMIDYLATE KINASE"/>
    <property type="match status" value="1"/>
</dbReference>
<dbReference type="PANTHER" id="PTHR10344:SF4">
    <property type="entry name" value="UMP-CMP KINASE 2, MITOCHONDRIAL"/>
    <property type="match status" value="1"/>
</dbReference>
<dbReference type="Pfam" id="PF02223">
    <property type="entry name" value="Thymidylate_kin"/>
    <property type="match status" value="1"/>
</dbReference>
<dbReference type="SUPFAM" id="SSF52540">
    <property type="entry name" value="P-loop containing nucleoside triphosphate hydrolases"/>
    <property type="match status" value="1"/>
</dbReference>
<feature type="chain" id="PRO_1000097398" description="Thymidylate kinase">
    <location>
        <begin position="1"/>
        <end position="225"/>
    </location>
</feature>
<feature type="binding site" evidence="1">
    <location>
        <begin position="9"/>
        <end position="16"/>
    </location>
    <ligand>
        <name>ATP</name>
        <dbReference type="ChEBI" id="CHEBI:30616"/>
    </ligand>
</feature>
<protein>
    <recommendedName>
        <fullName evidence="1">Thymidylate kinase</fullName>
        <ecNumber evidence="1">2.7.4.9</ecNumber>
    </recommendedName>
    <alternativeName>
        <fullName evidence="1">dTMP kinase</fullName>
    </alternativeName>
</protein>